<gene>
    <name type="primary">RNF183</name>
</gene>
<keyword id="KW-0053">Apoptosis</keyword>
<keyword id="KW-0256">Endoplasmic reticulum</keyword>
<keyword id="KW-0333">Golgi apparatus</keyword>
<keyword id="KW-0458">Lysosome</keyword>
<keyword id="KW-0472">Membrane</keyword>
<keyword id="KW-0479">Metal-binding</keyword>
<keyword id="KW-1185">Reference proteome</keyword>
<keyword id="KW-0808">Transferase</keyword>
<keyword id="KW-0812">Transmembrane</keyword>
<keyword id="KW-1133">Transmembrane helix</keyword>
<keyword id="KW-0832">Ubl conjugation</keyword>
<keyword id="KW-0833">Ubl conjugation pathway</keyword>
<keyword id="KW-0862">Zinc</keyword>
<keyword id="KW-0863">Zinc-finger</keyword>
<comment type="function">
    <text evidence="7 8">Acts as an E3 ubiquitin ligase catalyzing the covalent attachment of ubiquitin moieties onto substrate proteins (PubMed:29507230). Triggers apoptosis in response to prolonged ER stress by mediating the polyubiquitination and subsequent proteasomal degradation of BCL2L1 (PubMed:29507230). May collaborate with FATE1 to restrain BIK protein levels thus regulating apoptotic signaling (PubMed:26567849).</text>
</comment>
<comment type="catalytic activity">
    <reaction evidence="7">
        <text>S-ubiquitinyl-[E2 ubiquitin-conjugating enzyme]-L-cysteine + [acceptor protein]-L-lysine = [E2 ubiquitin-conjugating enzyme]-L-cysteine + N(6)-ubiquitinyl-[acceptor protein]-L-lysine.</text>
        <dbReference type="EC" id="2.3.2.27"/>
    </reaction>
</comment>
<comment type="pathway">
    <text evidence="7">Protein modification; protein ubiquitination.</text>
</comment>
<comment type="subunit">
    <text evidence="1 5 7">Interacts with FATE1 (PubMed:26567849). Interacts with SEC16A (By similarity). Interacts with BCL2L1 (PubMed:29507230).</text>
</comment>
<comment type="interaction">
    <interactant intactId="EBI-743938">
        <id>Q96D59</id>
    </interactant>
    <interactant intactId="EBI-640741">
        <id>P01023</id>
        <label>A2M</label>
    </interactant>
    <organismsDiffer>false</organismsDiffer>
    <experiments>3</experiments>
</comment>
<comment type="interaction">
    <interactant intactId="EBI-743938">
        <id>Q96D59</id>
    </interactant>
    <interactant intactId="EBI-21535880">
        <id>Q92870-2</id>
        <label>APBB2</label>
    </interactant>
    <organismsDiffer>false</organismsDiffer>
    <experiments>3</experiments>
</comment>
<comment type="interaction">
    <interactant intactId="EBI-743938">
        <id>Q96D59</id>
    </interactant>
    <interactant intactId="EBI-930964">
        <id>P54253</id>
        <label>ATXN1</label>
    </interactant>
    <organismsDiffer>false</organismsDiffer>
    <experiments>6</experiments>
</comment>
<comment type="interaction">
    <interactant intactId="EBI-743938">
        <id>Q96D59</id>
    </interactant>
    <interactant intactId="EBI-8589586">
        <id>P09172</id>
        <label>DBH</label>
    </interactant>
    <organismsDiffer>false</organismsDiffer>
    <experiments>3</experiments>
</comment>
<comment type="interaction">
    <interactant intactId="EBI-743938">
        <id>Q96D59</id>
    </interactant>
    <interactant intactId="EBI-25840379">
        <id>Q14203-5</id>
        <label>DCTN1</label>
    </interactant>
    <organismsDiffer>false</organismsDiffer>
    <experiments>3</experiments>
</comment>
<comment type="interaction">
    <interactant intactId="EBI-743938">
        <id>Q96D59</id>
    </interactant>
    <interactant intactId="EBI-10968534">
        <id>P50570-2</id>
        <label>DNM2</label>
    </interactant>
    <organismsDiffer>false</organismsDiffer>
    <experiments>3</experiments>
</comment>
<comment type="interaction">
    <interactant intactId="EBI-743938">
        <id>Q96D59</id>
    </interactant>
    <interactant intactId="EBI-750300">
        <id>Q01658</id>
        <label>DR1</label>
    </interactant>
    <organismsDiffer>false</organismsDiffer>
    <experiments>3</experiments>
</comment>
<comment type="interaction">
    <interactant intactId="EBI-743938">
        <id>Q96D59</id>
    </interactant>
    <interactant intactId="EBI-16466949">
        <id>Q13216-2</id>
        <label>ERCC8</label>
    </interactant>
    <organismsDiffer>false</organismsDiffer>
    <experiments>3</experiments>
</comment>
<comment type="interaction">
    <interactant intactId="EBI-743938">
        <id>Q96D59</id>
    </interactant>
    <interactant intactId="EBI-743099">
        <id>Q969F0</id>
        <label>FATE1</label>
    </interactant>
    <organismsDiffer>false</organismsDiffer>
    <experiments>4</experiments>
</comment>
<comment type="interaction">
    <interactant intactId="EBI-743938">
        <id>Q96D59</id>
    </interactant>
    <interactant intactId="EBI-949340">
        <id>Q16595</id>
        <label>FXN</label>
    </interactant>
    <organismsDiffer>false</organismsDiffer>
    <experiments>3</experiments>
</comment>
<comment type="interaction">
    <interactant intactId="EBI-743938">
        <id>Q96D59</id>
    </interactant>
    <interactant intactId="EBI-1955541">
        <id>Q53GS7</id>
        <label>GLE1</label>
    </interactant>
    <organismsDiffer>false</organismsDiffer>
    <experiments>3</experiments>
</comment>
<comment type="interaction">
    <interactant intactId="EBI-743938">
        <id>Q96D59</id>
    </interactant>
    <interactant intactId="EBI-349832">
        <id>Q9HD26</id>
        <label>GOPC</label>
    </interactant>
    <organismsDiffer>false</organismsDiffer>
    <experiments>3</experiments>
</comment>
<comment type="interaction">
    <interactant intactId="EBI-743938">
        <id>Q96D59</id>
    </interactant>
    <interactant intactId="EBI-11102276">
        <id>Q9HD26-2</id>
        <label>GOPC</label>
    </interactant>
    <organismsDiffer>false</organismsDiffer>
    <experiments>3</experiments>
</comment>
<comment type="interaction">
    <interactant intactId="EBI-743938">
        <id>Q96D59</id>
    </interactant>
    <interactant intactId="EBI-389564">
        <id>Q00403</id>
        <label>GTF2B</label>
    </interactant>
    <organismsDiffer>false</organismsDiffer>
    <experiments>3</experiments>
</comment>
<comment type="interaction">
    <interactant intactId="EBI-743938">
        <id>Q96D59</id>
    </interactant>
    <interactant intactId="EBI-1054873">
        <id>Q9Y5Q9</id>
        <label>GTF3C3</label>
    </interactant>
    <organismsDiffer>false</organismsDiffer>
    <experiments>3</experiments>
</comment>
<comment type="interaction">
    <interactant intactId="EBI-743938">
        <id>Q96D59</id>
    </interactant>
    <interactant intactId="EBI-7133736">
        <id>P07686</id>
        <label>HEXB</label>
    </interactant>
    <organismsDiffer>false</organismsDiffer>
    <experiments>3</experiments>
</comment>
<comment type="interaction">
    <interactant intactId="EBI-743938">
        <id>Q96D59</id>
    </interactant>
    <interactant intactId="EBI-12690664">
        <id>P28358</id>
        <label>HOXD10</label>
    </interactant>
    <organismsDiffer>false</organismsDiffer>
    <experiments>3</experiments>
</comment>
<comment type="interaction">
    <interactant intactId="EBI-743938">
        <id>Q96D59</id>
    </interactant>
    <interactant intactId="EBI-352682">
        <id>P04792</id>
        <label>HSPB1</label>
    </interactant>
    <organismsDiffer>false</organismsDiffer>
    <experiments>3</experiments>
</comment>
<comment type="interaction">
    <interactant intactId="EBI-743938">
        <id>Q96D59</id>
    </interactant>
    <interactant intactId="EBI-517086">
        <id>O43464</id>
        <label>HTRA2</label>
    </interactant>
    <organismsDiffer>false</organismsDiffer>
    <experiments>3</experiments>
</comment>
<comment type="interaction">
    <interactant intactId="EBI-743938">
        <id>Q96D59</id>
    </interactant>
    <interactant intactId="EBI-466029">
        <id>P42858</id>
        <label>HTT</label>
    </interactant>
    <organismsDiffer>false</organismsDiffer>
    <experiments>3</experiments>
</comment>
<comment type="interaction">
    <interactant intactId="EBI-743938">
        <id>Q96D59</id>
    </interactant>
    <interactant intactId="EBI-10975473">
        <id>O60333-2</id>
        <label>KIF1B</label>
    </interactant>
    <organismsDiffer>false</organismsDiffer>
    <experiments>3</experiments>
</comment>
<comment type="interaction">
    <interactant intactId="EBI-743938">
        <id>Q96D59</id>
    </interactant>
    <interactant intactId="EBI-725647">
        <id>Q99732</id>
        <label>LITAF</label>
    </interactant>
    <organismsDiffer>false</organismsDiffer>
    <experiments>3</experiments>
</comment>
<comment type="interaction">
    <interactant intactId="EBI-743938">
        <id>Q96D59</id>
    </interactant>
    <interactant intactId="EBI-1189067">
        <id>P51608</id>
        <label>MECP2</label>
    </interactant>
    <organismsDiffer>false</organismsDiffer>
    <experiments>3</experiments>
</comment>
<comment type="interaction">
    <interactant intactId="EBI-743938">
        <id>Q96D59</id>
    </interactant>
    <interactant intactId="EBI-713665">
        <id>P19404</id>
        <label>NDUFV2</label>
    </interactant>
    <organismsDiffer>false</organismsDiffer>
    <experiments>3</experiments>
</comment>
<comment type="interaction">
    <interactant intactId="EBI-743938">
        <id>Q96D59</id>
    </interactant>
    <interactant intactId="EBI-1014514">
        <id>P35240-4</id>
        <label>NF2</label>
    </interactant>
    <organismsDiffer>false</organismsDiffer>
    <experiments>3</experiments>
</comment>
<comment type="interaction">
    <interactant intactId="EBI-743938">
        <id>Q96D59</id>
    </interactant>
    <interactant intactId="EBI-1391623">
        <id>P29474</id>
        <label>NOS3</label>
    </interactant>
    <organismsDiffer>false</organismsDiffer>
    <experiments>3</experiments>
</comment>
<comment type="interaction">
    <interactant intactId="EBI-743938">
        <id>Q96D59</id>
    </interactant>
    <interactant intactId="EBI-50433196">
        <id>A0A6Q8PF08</id>
        <label>PMP22</label>
    </interactant>
    <organismsDiffer>false</organismsDiffer>
    <experiments>3</experiments>
</comment>
<comment type="interaction">
    <interactant intactId="EBI-743938">
        <id>Q96D59</id>
    </interactant>
    <interactant intactId="EBI-21251460">
        <id>O60260-5</id>
        <label>PRKN</label>
    </interactant>
    <organismsDiffer>false</organismsDiffer>
    <experiments>3</experiments>
</comment>
<comment type="interaction">
    <interactant intactId="EBI-743938">
        <id>Q96D59</id>
    </interactant>
    <interactant intactId="EBI-752074">
        <id>P41219</id>
        <label>PRPH</label>
    </interactant>
    <organismsDiffer>false</organismsDiffer>
    <experiments>3</experiments>
</comment>
<comment type="interaction">
    <interactant intactId="EBI-743938">
        <id>Q96D59</id>
    </interactant>
    <interactant intactId="EBI-749195">
        <id>P60891</id>
        <label>PRPS1</label>
    </interactant>
    <organismsDiffer>false</organismsDiffer>
    <experiments>3</experiments>
</comment>
<comment type="interaction">
    <interactant intactId="EBI-743938">
        <id>Q96D59</id>
    </interactant>
    <interactant intactId="EBI-396669">
        <id>Q9Y3C5</id>
        <label>RNF11</label>
    </interactant>
    <organismsDiffer>false</organismsDiffer>
    <experiments>3</experiments>
</comment>
<comment type="interaction">
    <interactant intactId="EBI-743938">
        <id>Q96D59</id>
    </interactant>
    <interactant intactId="EBI-985879">
        <id>P37840</id>
        <label>SNCA</label>
    </interactant>
    <organismsDiffer>false</organismsDiffer>
    <experiments>3</experiments>
</comment>
<comment type="interaction">
    <interactant intactId="EBI-743938">
        <id>Q96D59</id>
    </interactant>
    <interactant intactId="EBI-5235340">
        <id>Q7Z699</id>
        <label>SPRED1</label>
    </interactant>
    <organismsDiffer>false</organismsDiffer>
    <experiments>3</experiments>
</comment>
<comment type="interaction">
    <interactant intactId="EBI-743938">
        <id>Q96D59</id>
    </interactant>
    <interactant intactId="EBI-372899">
        <id>Q13148</id>
        <label>TARDBP</label>
    </interactant>
    <organismsDiffer>false</organismsDiffer>
    <experiments>3</experiments>
</comment>
<comment type="interaction">
    <interactant intactId="EBI-743938">
        <id>Q96D59</id>
    </interactant>
    <interactant intactId="EBI-723259">
        <id>O14907</id>
        <label>TAX1BP3</label>
    </interactant>
    <organismsDiffer>false</organismsDiffer>
    <experiments>3</experiments>
</comment>
<comment type="interaction">
    <interactant intactId="EBI-743938">
        <id>Q96D59</id>
    </interactant>
    <interactant intactId="EBI-2800203">
        <id>O14773</id>
        <label>TPP1</label>
    </interactant>
    <organismsDiffer>false</organismsDiffer>
    <experiments>3</experiments>
</comment>
<comment type="interaction">
    <interactant intactId="EBI-743938">
        <id>Q96D59</id>
    </interactant>
    <interactant intactId="EBI-12806590">
        <id>Q86WV8</id>
        <label>TSC1</label>
    </interactant>
    <organismsDiffer>false</organismsDiffer>
    <experiments>3</experiments>
</comment>
<comment type="interaction">
    <interactant intactId="EBI-743938">
        <id>Q96D59</id>
    </interactant>
    <interactant intactId="EBI-711909">
        <id>P02766</id>
        <label>TTR</label>
    </interactant>
    <organismsDiffer>false</organismsDiffer>
    <experiments>3</experiments>
</comment>
<comment type="interaction">
    <interactant intactId="EBI-743938">
        <id>Q96D59</id>
    </interactant>
    <interactant intactId="EBI-473850">
        <id>P61086</id>
        <label>UBE2K</label>
    </interactant>
    <organismsDiffer>false</organismsDiffer>
    <experiments>3</experiments>
</comment>
<comment type="interaction">
    <interactant intactId="EBI-743938">
        <id>Q96D59</id>
    </interactant>
    <interactant intactId="EBI-10285774">
        <id>Q96FI0</id>
        <label>UBE2W</label>
    </interactant>
    <organismsDiffer>false</organismsDiffer>
    <experiments>3</experiments>
</comment>
<comment type="interaction">
    <interactant intactId="EBI-743938">
        <id>Q96D59</id>
    </interactant>
    <interactant intactId="EBI-720609">
        <id>O76024</id>
        <label>WFS1</label>
    </interactant>
    <organismsDiffer>false</organismsDiffer>
    <experiments>3</experiments>
</comment>
<comment type="interaction">
    <interactant intactId="EBI-743938">
        <id>Q96D59</id>
    </interactant>
    <interactant intactId="EBI-25878161">
        <id>Q9P1N4</id>
    </interactant>
    <organismsDiffer>false</organismsDiffer>
    <experiments>3</experiments>
</comment>
<comment type="subcellular location">
    <subcellularLocation>
        <location evidence="7">Endoplasmic reticulum membrane</location>
        <topology evidence="9">Single-pass type IV membrane protein</topology>
    </subcellularLocation>
    <subcellularLocation>
        <location evidence="5">Endoplasmic reticulum</location>
    </subcellularLocation>
    <subcellularLocation>
        <location evidence="1">Golgi apparatus</location>
        <location evidence="1">cis-Golgi network membrane</location>
    </subcellularLocation>
    <subcellularLocation>
        <location evidence="1">Lysosome membrane</location>
    </subcellularLocation>
</comment>
<comment type="tissue specificity">
    <text evidence="6">Kidney and testis.</text>
</comment>
<comment type="induction">
    <text evidence="7">Up-regulated by ER stress in an ERN1-dependent manner.</text>
</comment>
<comment type="PTM">
    <text evidence="5 7">Autoubiquitinated (in vitro).</text>
</comment>
<evidence type="ECO:0000250" key="1">
    <source>
        <dbReference type="UniProtKB" id="Q8QZS5"/>
    </source>
</evidence>
<evidence type="ECO:0000255" key="2"/>
<evidence type="ECO:0000255" key="3">
    <source>
        <dbReference type="PROSITE-ProRule" id="PRU00175"/>
    </source>
</evidence>
<evidence type="ECO:0000269" key="4">
    <source>
    </source>
</evidence>
<evidence type="ECO:0000269" key="5">
    <source>
    </source>
</evidence>
<evidence type="ECO:0000269" key="6">
    <source>
    </source>
</evidence>
<evidence type="ECO:0000269" key="7">
    <source>
    </source>
</evidence>
<evidence type="ECO:0000305" key="8">
    <source>
    </source>
</evidence>
<evidence type="ECO:0000305" key="9">
    <source>
    </source>
</evidence>
<protein>
    <recommendedName>
        <fullName>E3 ubiquitin-protein ligase RNF183</fullName>
        <ecNumber evidence="7">2.3.2.27</ecNumber>
    </recommendedName>
</protein>
<sequence length="192" mass="21617">MAEQQGRELEAECPVCWNPFNNTFHTPKMLDCCHSFCVECLAHLSLVTPARRRLLCPLCRQPTVLASGQPVTDLPTDTAMLALLRLEPHHVILEGHQLCLKDQPKSRYFLRQPQVYTLDLGPQPGGQTGPPPDTASATVSTPILIPSHHSLRECFRNPQFRIFAYLMAVILSVTLLLIFSIFWTKQFLWGVG</sequence>
<dbReference type="EC" id="2.3.2.27" evidence="7"/>
<dbReference type="EMBL" id="AL449305">
    <property type="status" value="NOT_ANNOTATED_CDS"/>
    <property type="molecule type" value="Genomic_DNA"/>
</dbReference>
<dbReference type="EMBL" id="BC013036">
    <property type="protein sequence ID" value="AAH13036.1"/>
    <property type="molecule type" value="mRNA"/>
</dbReference>
<dbReference type="CCDS" id="CCDS43866.1"/>
<dbReference type="RefSeq" id="NP_001358163.1">
    <property type="nucleotide sequence ID" value="NM_001371234.1"/>
</dbReference>
<dbReference type="RefSeq" id="NP_001358164.1">
    <property type="nucleotide sequence ID" value="NM_001371235.1"/>
</dbReference>
<dbReference type="RefSeq" id="NP_001358165.1">
    <property type="nucleotide sequence ID" value="NM_001371236.1"/>
</dbReference>
<dbReference type="RefSeq" id="NP_001358166.1">
    <property type="nucleotide sequence ID" value="NM_001371237.1"/>
</dbReference>
<dbReference type="RefSeq" id="NP_001374497.1">
    <property type="nucleotide sequence ID" value="NM_001387568.1"/>
</dbReference>
<dbReference type="RefSeq" id="NP_001374498.1">
    <property type="nucleotide sequence ID" value="NM_001387569.1"/>
</dbReference>
<dbReference type="RefSeq" id="NP_659488.2">
    <property type="nucleotide sequence ID" value="NM_145051.5"/>
</dbReference>
<dbReference type="RefSeq" id="XP_006717015.1">
    <property type="nucleotide sequence ID" value="XM_006716952.2"/>
</dbReference>
<dbReference type="RefSeq" id="XP_011516520.1">
    <property type="nucleotide sequence ID" value="XM_011518218.1"/>
</dbReference>
<dbReference type="RefSeq" id="XP_011516521.1">
    <property type="nucleotide sequence ID" value="XM_011518219.1"/>
</dbReference>
<dbReference type="RefSeq" id="XP_011516522.1">
    <property type="nucleotide sequence ID" value="XM_011518220.1"/>
</dbReference>
<dbReference type="RefSeq" id="XP_016869757.1">
    <property type="nucleotide sequence ID" value="XM_017014268.1"/>
</dbReference>
<dbReference type="RefSeq" id="XP_024303178.1">
    <property type="nucleotide sequence ID" value="XM_024447410.1"/>
</dbReference>
<dbReference type="RefSeq" id="XP_024303179.1">
    <property type="nucleotide sequence ID" value="XM_024447411.2"/>
</dbReference>
<dbReference type="RefSeq" id="XP_024303180.1">
    <property type="nucleotide sequence ID" value="XM_024447412.2"/>
</dbReference>
<dbReference type="RefSeq" id="XP_047278717.1">
    <property type="nucleotide sequence ID" value="XM_047422761.1"/>
</dbReference>
<dbReference type="RefSeq" id="XP_047278718.1">
    <property type="nucleotide sequence ID" value="XM_047422762.1"/>
</dbReference>
<dbReference type="RefSeq" id="XP_047278719.1">
    <property type="nucleotide sequence ID" value="XM_047422763.1"/>
</dbReference>
<dbReference type="RefSeq" id="XP_047278720.1">
    <property type="nucleotide sequence ID" value="XM_047422764.1"/>
</dbReference>
<dbReference type="RefSeq" id="XP_047278721.1">
    <property type="nucleotide sequence ID" value="XM_047422765.1"/>
</dbReference>
<dbReference type="RefSeq" id="XP_054217938.1">
    <property type="nucleotide sequence ID" value="XM_054361963.1"/>
</dbReference>
<dbReference type="RefSeq" id="XP_054217939.1">
    <property type="nucleotide sequence ID" value="XM_054361964.1"/>
</dbReference>
<dbReference type="RefSeq" id="XP_054217940.1">
    <property type="nucleotide sequence ID" value="XM_054361965.1"/>
</dbReference>
<dbReference type="RefSeq" id="XP_054217941.1">
    <property type="nucleotide sequence ID" value="XM_054361966.1"/>
</dbReference>
<dbReference type="RefSeq" id="XP_054217942.1">
    <property type="nucleotide sequence ID" value="XM_054361967.1"/>
</dbReference>
<dbReference type="RefSeq" id="XP_054217943.1">
    <property type="nucleotide sequence ID" value="XM_054361968.1"/>
</dbReference>
<dbReference type="RefSeq" id="XP_054217944.1">
    <property type="nucleotide sequence ID" value="XM_054361969.1"/>
</dbReference>
<dbReference type="RefSeq" id="XP_054217945.1">
    <property type="nucleotide sequence ID" value="XM_054361970.1"/>
</dbReference>
<dbReference type="SMR" id="Q96D59"/>
<dbReference type="BioGRID" id="126500">
    <property type="interactions" value="22"/>
</dbReference>
<dbReference type="FunCoup" id="Q96D59">
    <property type="interactions" value="97"/>
</dbReference>
<dbReference type="IntAct" id="Q96D59">
    <property type="interactions" value="48"/>
</dbReference>
<dbReference type="STRING" id="9606.ENSP00000419454"/>
<dbReference type="BioMuta" id="RNF183"/>
<dbReference type="DMDM" id="74760778"/>
<dbReference type="PaxDb" id="9606-ENSP00000419454"/>
<dbReference type="PeptideAtlas" id="Q96D59"/>
<dbReference type="Antibodypedia" id="54188">
    <property type="antibodies" value="99 antibodies from 19 providers"/>
</dbReference>
<dbReference type="DNASU" id="138065"/>
<dbReference type="Ensembl" id="ENST00000297894.5">
    <property type="protein sequence ID" value="ENSP00000417943.1"/>
    <property type="gene ID" value="ENSG00000165188.14"/>
</dbReference>
<dbReference type="Ensembl" id="ENST00000416588.2">
    <property type="protein sequence ID" value="ENSP00000420740.1"/>
    <property type="gene ID" value="ENSG00000165188.14"/>
</dbReference>
<dbReference type="Ensembl" id="ENST00000441031.3">
    <property type="protein sequence ID" value="ENSP00000417176.1"/>
    <property type="gene ID" value="ENSG00000165188.14"/>
</dbReference>
<dbReference type="Ensembl" id="ENST00000478815.1">
    <property type="protein sequence ID" value="ENSP00000419454.1"/>
    <property type="gene ID" value="ENSG00000165188.14"/>
</dbReference>
<dbReference type="Ensembl" id="ENST00000489339.2">
    <property type="protein sequence ID" value="ENSP00000508293.1"/>
    <property type="gene ID" value="ENSG00000165188.14"/>
</dbReference>
<dbReference type="GeneID" id="138065"/>
<dbReference type="KEGG" id="hsa:138065"/>
<dbReference type="MANE-Select" id="ENST00000489339.2">
    <property type="protein sequence ID" value="ENSP00000508293.1"/>
    <property type="RefSeq nucleotide sequence ID" value="NM_001371237.1"/>
    <property type="RefSeq protein sequence ID" value="NP_001358166.1"/>
</dbReference>
<dbReference type="UCSC" id="uc004bgz.4">
    <property type="organism name" value="human"/>
</dbReference>
<dbReference type="AGR" id="HGNC:28721"/>
<dbReference type="CTD" id="138065"/>
<dbReference type="DisGeNET" id="138065"/>
<dbReference type="GeneCards" id="RNF183"/>
<dbReference type="HGNC" id="HGNC:28721">
    <property type="gene designation" value="RNF183"/>
</dbReference>
<dbReference type="HPA" id="ENSG00000165188">
    <property type="expression patterns" value="Tissue enhanced (epididymis, kidney)"/>
</dbReference>
<dbReference type="MIM" id="621029">
    <property type="type" value="gene"/>
</dbReference>
<dbReference type="neXtProt" id="NX_Q96D59"/>
<dbReference type="OpenTargets" id="ENSG00000165188"/>
<dbReference type="PharmGKB" id="PA142671055"/>
<dbReference type="VEuPathDB" id="HostDB:ENSG00000165188"/>
<dbReference type="eggNOG" id="KOG2177">
    <property type="taxonomic scope" value="Eukaryota"/>
</dbReference>
<dbReference type="GeneTree" id="ENSGT00940000162965"/>
<dbReference type="HOGENOM" id="CLU_122905_0_0_1"/>
<dbReference type="InParanoid" id="Q96D59"/>
<dbReference type="OMA" id="PNHIILE"/>
<dbReference type="OrthoDB" id="252722at2759"/>
<dbReference type="PAN-GO" id="Q96D59">
    <property type="GO annotations" value="5 GO annotations based on evolutionary models"/>
</dbReference>
<dbReference type="PhylomeDB" id="Q96D59"/>
<dbReference type="TreeFam" id="TF337102"/>
<dbReference type="PathwayCommons" id="Q96D59"/>
<dbReference type="SignaLink" id="Q96D59"/>
<dbReference type="SIGNOR" id="Q96D59"/>
<dbReference type="UniPathway" id="UPA00143"/>
<dbReference type="BioGRID-ORCS" id="138065">
    <property type="hits" value="11 hits in 1184 CRISPR screens"/>
</dbReference>
<dbReference type="ChiTaRS" id="RNF183">
    <property type="organism name" value="human"/>
</dbReference>
<dbReference type="GenomeRNAi" id="138065"/>
<dbReference type="Pharos" id="Q96D59">
    <property type="development level" value="Tbio"/>
</dbReference>
<dbReference type="PRO" id="PR:Q96D59"/>
<dbReference type="Proteomes" id="UP000005640">
    <property type="component" value="Chromosome 9"/>
</dbReference>
<dbReference type="RNAct" id="Q96D59">
    <property type="molecule type" value="protein"/>
</dbReference>
<dbReference type="Bgee" id="ENSG00000165188">
    <property type="expression patterns" value="Expressed in pancreatic ductal cell and 110 other cell types or tissues"/>
</dbReference>
<dbReference type="ExpressionAtlas" id="Q96D59">
    <property type="expression patterns" value="baseline and differential"/>
</dbReference>
<dbReference type="GO" id="GO:0033106">
    <property type="term" value="C:cis-Golgi network membrane"/>
    <property type="evidence" value="ECO:0000250"/>
    <property type="project" value="UniProtKB"/>
</dbReference>
<dbReference type="GO" id="GO:0005783">
    <property type="term" value="C:endoplasmic reticulum"/>
    <property type="evidence" value="ECO:0000314"/>
    <property type="project" value="UniProtKB"/>
</dbReference>
<dbReference type="GO" id="GO:0005789">
    <property type="term" value="C:endoplasmic reticulum membrane"/>
    <property type="evidence" value="ECO:0000314"/>
    <property type="project" value="UniProtKB"/>
</dbReference>
<dbReference type="GO" id="GO:0005765">
    <property type="term" value="C:lysosomal membrane"/>
    <property type="evidence" value="ECO:0000250"/>
    <property type="project" value="UniProtKB"/>
</dbReference>
<dbReference type="GO" id="GO:0061630">
    <property type="term" value="F:ubiquitin protein ligase activity"/>
    <property type="evidence" value="ECO:0000314"/>
    <property type="project" value="UniProtKB"/>
</dbReference>
<dbReference type="GO" id="GO:0008270">
    <property type="term" value="F:zinc ion binding"/>
    <property type="evidence" value="ECO:0007669"/>
    <property type="project" value="UniProtKB-KW"/>
</dbReference>
<dbReference type="GO" id="GO:0006915">
    <property type="term" value="P:apoptotic process"/>
    <property type="evidence" value="ECO:0007669"/>
    <property type="project" value="UniProtKB-KW"/>
</dbReference>
<dbReference type="GO" id="GO:1902237">
    <property type="term" value="P:positive regulation of endoplasmic reticulum stress-induced intrinsic apoptotic signaling pathway"/>
    <property type="evidence" value="ECO:0000315"/>
    <property type="project" value="UniProtKB"/>
</dbReference>
<dbReference type="GO" id="GO:0051865">
    <property type="term" value="P:protein autoubiquitination"/>
    <property type="evidence" value="ECO:0000315"/>
    <property type="project" value="UniProtKB"/>
</dbReference>
<dbReference type="GO" id="GO:0000209">
    <property type="term" value="P:protein polyubiquitination"/>
    <property type="evidence" value="ECO:0000314"/>
    <property type="project" value="UniProtKB"/>
</dbReference>
<dbReference type="GO" id="GO:0016567">
    <property type="term" value="P:protein ubiquitination"/>
    <property type="evidence" value="ECO:0000318"/>
    <property type="project" value="GO_Central"/>
</dbReference>
<dbReference type="GO" id="GO:0034976">
    <property type="term" value="P:response to endoplasmic reticulum stress"/>
    <property type="evidence" value="ECO:0000314"/>
    <property type="project" value="UniProtKB"/>
</dbReference>
<dbReference type="CDD" id="cd16556">
    <property type="entry name" value="RING-HC_RNF183-like"/>
    <property type="match status" value="1"/>
</dbReference>
<dbReference type="FunFam" id="3.30.40.10:FF:000409">
    <property type="entry name" value="probable E3 ubiquitin-protein ligase RNF183"/>
    <property type="match status" value="1"/>
</dbReference>
<dbReference type="Gene3D" id="3.30.40.10">
    <property type="entry name" value="Zinc/RING finger domain, C3HC4 (zinc finger)"/>
    <property type="match status" value="1"/>
</dbReference>
<dbReference type="InterPro" id="IPR051435">
    <property type="entry name" value="RING_finger_E3_ubiq-ligases"/>
</dbReference>
<dbReference type="InterPro" id="IPR001841">
    <property type="entry name" value="Znf_RING"/>
</dbReference>
<dbReference type="InterPro" id="IPR013083">
    <property type="entry name" value="Znf_RING/FYVE/PHD"/>
</dbReference>
<dbReference type="InterPro" id="IPR017907">
    <property type="entry name" value="Znf_RING_CS"/>
</dbReference>
<dbReference type="PANTHER" id="PTHR22791:SF7">
    <property type="entry name" value="E3 UBIQUITIN-PROTEIN LIGASE RNF183"/>
    <property type="match status" value="1"/>
</dbReference>
<dbReference type="PANTHER" id="PTHR22791">
    <property type="entry name" value="RING-TYPE DOMAIN-CONTAINING PROTEIN"/>
    <property type="match status" value="1"/>
</dbReference>
<dbReference type="SMART" id="SM00184">
    <property type="entry name" value="RING"/>
    <property type="match status" value="1"/>
</dbReference>
<dbReference type="SUPFAM" id="SSF57850">
    <property type="entry name" value="RING/U-box"/>
    <property type="match status" value="1"/>
</dbReference>
<dbReference type="PROSITE" id="PS00518">
    <property type="entry name" value="ZF_RING_1"/>
    <property type="match status" value="1"/>
</dbReference>
<dbReference type="PROSITE" id="PS50089">
    <property type="entry name" value="ZF_RING_2"/>
    <property type="match status" value="1"/>
</dbReference>
<name>RN183_HUMAN</name>
<proteinExistence type="evidence at protein level"/>
<accession>Q96D59</accession>
<reference key="1">
    <citation type="journal article" date="2004" name="Nature">
        <title>DNA sequence and analysis of human chromosome 9.</title>
        <authorList>
            <person name="Humphray S.J."/>
            <person name="Oliver K."/>
            <person name="Hunt A.R."/>
            <person name="Plumb R.W."/>
            <person name="Loveland J.E."/>
            <person name="Howe K.L."/>
            <person name="Andrews T.D."/>
            <person name="Searle S."/>
            <person name="Hunt S.E."/>
            <person name="Scott C.E."/>
            <person name="Jones M.C."/>
            <person name="Ainscough R."/>
            <person name="Almeida J.P."/>
            <person name="Ambrose K.D."/>
            <person name="Ashwell R.I.S."/>
            <person name="Babbage A.K."/>
            <person name="Babbage S."/>
            <person name="Bagguley C.L."/>
            <person name="Bailey J."/>
            <person name="Banerjee R."/>
            <person name="Barker D.J."/>
            <person name="Barlow K.F."/>
            <person name="Bates K."/>
            <person name="Beasley H."/>
            <person name="Beasley O."/>
            <person name="Bird C.P."/>
            <person name="Bray-Allen S."/>
            <person name="Brown A.J."/>
            <person name="Brown J.Y."/>
            <person name="Burford D."/>
            <person name="Burrill W."/>
            <person name="Burton J."/>
            <person name="Carder C."/>
            <person name="Carter N.P."/>
            <person name="Chapman J.C."/>
            <person name="Chen Y."/>
            <person name="Clarke G."/>
            <person name="Clark S.Y."/>
            <person name="Clee C.M."/>
            <person name="Clegg S."/>
            <person name="Collier R.E."/>
            <person name="Corby N."/>
            <person name="Crosier M."/>
            <person name="Cummings A.T."/>
            <person name="Davies J."/>
            <person name="Dhami P."/>
            <person name="Dunn M."/>
            <person name="Dutta I."/>
            <person name="Dyer L.W."/>
            <person name="Earthrowl M.E."/>
            <person name="Faulkner L."/>
            <person name="Fleming C.J."/>
            <person name="Frankish A."/>
            <person name="Frankland J.A."/>
            <person name="French L."/>
            <person name="Fricker D.G."/>
            <person name="Garner P."/>
            <person name="Garnett J."/>
            <person name="Ghori J."/>
            <person name="Gilbert J.G.R."/>
            <person name="Glison C."/>
            <person name="Grafham D.V."/>
            <person name="Gribble S."/>
            <person name="Griffiths C."/>
            <person name="Griffiths-Jones S."/>
            <person name="Grocock R."/>
            <person name="Guy J."/>
            <person name="Hall R.E."/>
            <person name="Hammond S."/>
            <person name="Harley J.L."/>
            <person name="Harrison E.S.I."/>
            <person name="Hart E.A."/>
            <person name="Heath P.D."/>
            <person name="Henderson C.D."/>
            <person name="Hopkins B.L."/>
            <person name="Howard P.J."/>
            <person name="Howden P.J."/>
            <person name="Huckle E."/>
            <person name="Johnson C."/>
            <person name="Johnson D."/>
            <person name="Joy A.A."/>
            <person name="Kay M."/>
            <person name="Keenan S."/>
            <person name="Kershaw J.K."/>
            <person name="Kimberley A.M."/>
            <person name="King A."/>
            <person name="Knights A."/>
            <person name="Laird G.K."/>
            <person name="Langford C."/>
            <person name="Lawlor S."/>
            <person name="Leongamornlert D.A."/>
            <person name="Leversha M."/>
            <person name="Lloyd C."/>
            <person name="Lloyd D.M."/>
            <person name="Lovell J."/>
            <person name="Martin S."/>
            <person name="Mashreghi-Mohammadi M."/>
            <person name="Matthews L."/>
            <person name="McLaren S."/>
            <person name="McLay K.E."/>
            <person name="McMurray A."/>
            <person name="Milne S."/>
            <person name="Nickerson T."/>
            <person name="Nisbett J."/>
            <person name="Nordsiek G."/>
            <person name="Pearce A.V."/>
            <person name="Peck A.I."/>
            <person name="Porter K.M."/>
            <person name="Pandian R."/>
            <person name="Pelan S."/>
            <person name="Phillimore B."/>
            <person name="Povey S."/>
            <person name="Ramsey Y."/>
            <person name="Rand V."/>
            <person name="Scharfe M."/>
            <person name="Sehra H.K."/>
            <person name="Shownkeen R."/>
            <person name="Sims S.K."/>
            <person name="Skuce C.D."/>
            <person name="Smith M."/>
            <person name="Steward C.A."/>
            <person name="Swarbreck D."/>
            <person name="Sycamore N."/>
            <person name="Tester J."/>
            <person name="Thorpe A."/>
            <person name="Tracey A."/>
            <person name="Tromans A."/>
            <person name="Thomas D.W."/>
            <person name="Wall M."/>
            <person name="Wallis J.M."/>
            <person name="West A.P."/>
            <person name="Whitehead S.L."/>
            <person name="Willey D.L."/>
            <person name="Williams S.A."/>
            <person name="Wilming L."/>
            <person name="Wray P.W."/>
            <person name="Young L."/>
            <person name="Ashurst J.L."/>
            <person name="Coulson A."/>
            <person name="Blocker H."/>
            <person name="Durbin R.M."/>
            <person name="Sulston J.E."/>
            <person name="Hubbard T."/>
            <person name="Jackson M.J."/>
            <person name="Bentley D.R."/>
            <person name="Beck S."/>
            <person name="Rogers J."/>
            <person name="Dunham I."/>
        </authorList>
    </citation>
    <scope>NUCLEOTIDE SEQUENCE [LARGE SCALE GENOMIC DNA]</scope>
</reference>
<reference key="2">
    <citation type="journal article" date="2004" name="Genome Res.">
        <title>The status, quality, and expansion of the NIH full-length cDNA project: the Mammalian Gene Collection (MGC).</title>
        <authorList>
            <consortium name="The MGC Project Team"/>
        </authorList>
    </citation>
    <scope>NUCLEOTIDE SEQUENCE [LARGE SCALE MRNA]</scope>
    <scope>VARIANTS THR-82 AND ARG-114</scope>
    <source>
        <tissue>Lung</tissue>
    </source>
</reference>
<reference key="3">
    <citation type="journal article" date="2015" name="Nat. Commun.">
        <title>Comprehensive functional characterization of cancer-testis antigens defines obligate participation in multiple hallmarks of cancer.</title>
        <authorList>
            <person name="Maxfield K.E."/>
            <person name="Taus P.J."/>
            <person name="Corcoran K."/>
            <person name="Wooten J."/>
            <person name="Macion J."/>
            <person name="Zhou Y."/>
            <person name="Borromeo M."/>
            <person name="Kollipara R.K."/>
            <person name="Yan J."/>
            <person name="Xie Y."/>
            <person name="Xie X.J."/>
            <person name="Whitehurst A.W."/>
        </authorList>
    </citation>
    <scope>FUNCTION</scope>
    <scope>INTERACTION WITH FATE1</scope>
    <scope>SUBCELLULAR LOCATION</scope>
    <scope>MUTAGENESIS OF CYS-13 AND CYS-59</scope>
    <scope>UBIQUITINATION</scope>
</reference>
<reference key="4">
    <citation type="journal article" date="2018" name="PLoS ONE">
        <title>Sec16A, a key protein in COPII vesicle formation, regulates the stability and localization of the novel ubiquitin ligase RNF183.</title>
        <authorList>
            <person name="Wu Y."/>
            <person name="Guo X.P."/>
            <person name="Kanemoto S."/>
            <person name="Maeoka Y."/>
            <person name="Saito A."/>
            <person name="Asada R."/>
            <person name="Matsuhisa K."/>
            <person name="Ohtake Y."/>
            <person name="Imaizumi K."/>
            <person name="Kaneko M."/>
        </authorList>
    </citation>
    <scope>TISSUE SPECIFICITY</scope>
</reference>
<reference key="5">
    <citation type="journal article" date="2018" name="Proc. Natl. Acad. Sci. U.S.A.">
        <title>Transmembrane E3 ligase RNF183 mediates ER stress-induced apoptosis by degrading Bcl-xL.</title>
        <authorList>
            <person name="Wu Y."/>
            <person name="Li X."/>
            <person name="Jia J."/>
            <person name="Zhang Y."/>
            <person name="Li J."/>
            <person name="Zhu Z."/>
            <person name="Wang H."/>
            <person name="Tang J."/>
            <person name="Hu J."/>
        </authorList>
    </citation>
    <scope>FUNCTION</scope>
    <scope>CATALYTIC ACTIVITY</scope>
    <scope>SUBCELLULAR LOCATION</scope>
    <scope>TOPOLOGY</scope>
    <scope>INDUCTION</scope>
    <scope>INTERACTION WITH BCL2L1</scope>
    <scope>MUTAGENESIS OF CYS-13; CYS-16; LYS-28; LYS-101 AND LYS-105</scope>
</reference>
<feature type="chain" id="PRO_0000247358" description="E3 ubiquitin-protein ligase RNF183">
    <location>
        <begin position="1"/>
        <end position="192"/>
    </location>
</feature>
<feature type="topological domain" description="Cytoplasmic" evidence="9">
    <location>
        <begin position="1"/>
        <end position="161"/>
    </location>
</feature>
<feature type="transmembrane region" description="Helical; Anchor for type IV membrane protein" evidence="2">
    <location>
        <begin position="162"/>
        <end position="182"/>
    </location>
</feature>
<feature type="topological domain" description="Lumenal" evidence="9">
    <location>
        <begin position="183"/>
        <end position="192"/>
    </location>
</feature>
<feature type="zinc finger region" description="RING-type" evidence="3">
    <location>
        <begin position="13"/>
        <end position="60"/>
    </location>
</feature>
<feature type="sequence variant" id="VAR_027095" description="In dbSNP:rs3750533." evidence="4">
    <original>A</original>
    <variation>T</variation>
    <location>
        <position position="82"/>
    </location>
</feature>
<feature type="sequence variant" id="VAR_027096" description="In dbSNP:rs3750534." evidence="4">
    <original>Q</original>
    <variation>R</variation>
    <location>
        <position position="114"/>
    </location>
</feature>
<feature type="mutagenesis site" description="Abolishes autoubiquitination; when associated with A-59." evidence="5">
    <original>C</original>
    <variation>A</variation>
    <location>
        <position position="13"/>
    </location>
</feature>
<feature type="mutagenesis site" description="Loss of autoubiquitination and reduced ubiquitination of BCL2L1; when associated with S-16." evidence="7">
    <original>C</original>
    <variation>S</variation>
    <location>
        <position position="13"/>
    </location>
</feature>
<feature type="mutagenesis site" description="Loss of autoubiquitination and reduced ubiquitination of BCL2L1; when associated with S-13." evidence="7">
    <original>C</original>
    <variation>S</variation>
    <location>
        <position position="16"/>
    </location>
</feature>
<feature type="mutagenesis site" description="Loss of autoubiquitination but no effect on ubiquitination of BCL2L1; when associated with R-101 and R-105." evidence="7">
    <original>K</original>
    <variation>R</variation>
    <location>
        <position position="28"/>
    </location>
</feature>
<feature type="mutagenesis site" description="Abolishes autoubiquitination; when associated with A-13." evidence="5">
    <original>C</original>
    <variation>A</variation>
    <location>
        <position position="59"/>
    </location>
</feature>
<feature type="mutagenesis site" description="Loss of autoubiquitination but no effect on ubiquitination of BCL2L1; when associated with R-28 and R-105." evidence="7">
    <original>K</original>
    <variation>R</variation>
    <location>
        <position position="101"/>
    </location>
</feature>
<feature type="mutagenesis site" description="Loss of autoubiquitination but no effect on ubiquitination of BCL2L1; when associated with R-28 and R-101." evidence="7">
    <original>K</original>
    <variation>R</variation>
    <location>
        <position position="105"/>
    </location>
</feature>
<organism>
    <name type="scientific">Homo sapiens</name>
    <name type="common">Human</name>
    <dbReference type="NCBI Taxonomy" id="9606"/>
    <lineage>
        <taxon>Eukaryota</taxon>
        <taxon>Metazoa</taxon>
        <taxon>Chordata</taxon>
        <taxon>Craniata</taxon>
        <taxon>Vertebrata</taxon>
        <taxon>Euteleostomi</taxon>
        <taxon>Mammalia</taxon>
        <taxon>Eutheria</taxon>
        <taxon>Euarchontoglires</taxon>
        <taxon>Primates</taxon>
        <taxon>Haplorrhini</taxon>
        <taxon>Catarrhini</taxon>
        <taxon>Hominidae</taxon>
        <taxon>Homo</taxon>
    </lineage>
</organism>